<geneLocation type="chloroplast"/>
<sequence length="48" mass="5792">MLLLKHGTIEILDQKTMYGWYELPKQEFLNGEQPEPITHYIKQFPLMK</sequence>
<organism>
    <name type="scientific">Amborella trichopoda</name>
    <dbReference type="NCBI Taxonomy" id="13333"/>
    <lineage>
        <taxon>Eukaryota</taxon>
        <taxon>Viridiplantae</taxon>
        <taxon>Streptophyta</taxon>
        <taxon>Embryophyta</taxon>
        <taxon>Tracheophyta</taxon>
        <taxon>Spermatophyta</taxon>
        <taxon>Magnoliopsida</taxon>
        <taxon>Amborellales</taxon>
        <taxon>Amborellaceae</taxon>
        <taxon>Amborella</taxon>
    </lineage>
</organism>
<dbReference type="EMBL" id="AJ506156">
    <property type="protein sequence ID" value="CAD45150.1"/>
    <property type="molecule type" value="Genomic_DNA"/>
</dbReference>
<dbReference type="EMBL" id="AJ506156">
    <property type="protein sequence ID" value="CAD45167.1"/>
    <property type="molecule type" value="Genomic_DNA"/>
</dbReference>
<dbReference type="STRING" id="13333.Q70XV4"/>
<dbReference type="Proteomes" id="UP000017836">
    <property type="component" value="Chloroplast"/>
</dbReference>
<dbReference type="GO" id="GO:0009507">
    <property type="term" value="C:chloroplast"/>
    <property type="evidence" value="ECO:0007669"/>
    <property type="project" value="UniProtKB-SubCell"/>
</dbReference>
<dbReference type="InterPro" id="IPR019645">
    <property type="entry name" value="Uncharacterised_Ycf15"/>
</dbReference>
<dbReference type="Pfam" id="PF10705">
    <property type="entry name" value="Ycf15"/>
    <property type="match status" value="1"/>
</dbReference>
<proteinExistence type="uncertain"/>
<comment type="subcellular location">
    <subcellularLocation>
        <location>Plastid</location>
        <location>Chloroplast</location>
    </subcellularLocation>
</comment>
<comment type="similarity">
    <text evidence="1">Belongs to the ycf15 family.</text>
</comment>
<comment type="caution">
    <text evidence="1">Could be the product of a pseudogene.</text>
</comment>
<gene>
    <name type="primary">ycf15-A</name>
</gene>
<gene>
    <name type="primary">ycf15-B</name>
</gene>
<keyword id="KW-0150">Chloroplast</keyword>
<keyword id="KW-0934">Plastid</keyword>
<keyword id="KW-1185">Reference proteome</keyword>
<name>YCF15_AMBTC</name>
<accession>Q70XV4</accession>
<evidence type="ECO:0000305" key="1"/>
<protein>
    <recommendedName>
        <fullName>Putative uncharacterized protein ycf15</fullName>
    </recommendedName>
</protein>
<feature type="chain" id="PRO_0000360374" description="Putative uncharacterized protein ycf15">
    <location>
        <begin position="1"/>
        <end position="48"/>
    </location>
</feature>
<reference key="1">
    <citation type="journal article" date="2003" name="Mol. Biol. Evol.">
        <title>Analysis of the Amborella trichopoda chloroplast genome sequence suggests that Amborella is not a basal angiosperm.</title>
        <authorList>
            <person name="Goremykin V.V."/>
            <person name="Hirsch-Ernst K.I."/>
            <person name="Wolfl S."/>
            <person name="Hellwig F.H."/>
        </authorList>
    </citation>
    <scope>NUCLEOTIDE SEQUENCE [LARGE SCALE GENOMIC DNA]</scope>
</reference>